<dbReference type="EC" id="2.3.1.109" evidence="1"/>
<dbReference type="EMBL" id="AL513382">
    <property type="protein sequence ID" value="CAD02050.1"/>
    <property type="molecule type" value="Genomic_DNA"/>
</dbReference>
<dbReference type="EMBL" id="AE014613">
    <property type="status" value="NOT_ANNOTATED_CDS"/>
    <property type="molecule type" value="Genomic_DNA"/>
</dbReference>
<dbReference type="RefSeq" id="NP_456208.1">
    <property type="nucleotide sequence ID" value="NC_003198.1"/>
</dbReference>
<dbReference type="RefSeq" id="WP_001263882.1">
    <property type="nucleotide sequence ID" value="NZ_QXGZ01000050.1"/>
</dbReference>
<dbReference type="SMR" id="Q8Z6G0"/>
<dbReference type="STRING" id="220341.gene:17585742"/>
<dbReference type="KEGG" id="sty:STY1810"/>
<dbReference type="PATRIC" id="fig|220341.7.peg.1822"/>
<dbReference type="eggNOG" id="COG3138">
    <property type="taxonomic scope" value="Bacteria"/>
</dbReference>
<dbReference type="HOGENOM" id="CLU_057655_0_0_6"/>
<dbReference type="OMA" id="FDGGPHF"/>
<dbReference type="OrthoDB" id="21121at2"/>
<dbReference type="UniPathway" id="UPA00185">
    <property type="reaction ID" value="UER00279"/>
</dbReference>
<dbReference type="Proteomes" id="UP000000541">
    <property type="component" value="Chromosome"/>
</dbReference>
<dbReference type="Proteomes" id="UP000002670">
    <property type="component" value="Chromosome"/>
</dbReference>
<dbReference type="GO" id="GO:0008791">
    <property type="term" value="F:arginine N-succinyltransferase activity"/>
    <property type="evidence" value="ECO:0007669"/>
    <property type="project" value="UniProtKB-UniRule"/>
</dbReference>
<dbReference type="GO" id="GO:0019544">
    <property type="term" value="P:arginine catabolic process to glutamate"/>
    <property type="evidence" value="ECO:0007669"/>
    <property type="project" value="UniProtKB-UniRule"/>
</dbReference>
<dbReference type="GO" id="GO:0019545">
    <property type="term" value="P:arginine catabolic process to succinate"/>
    <property type="evidence" value="ECO:0007669"/>
    <property type="project" value="UniProtKB-UniRule"/>
</dbReference>
<dbReference type="Gene3D" id="2.40.40.20">
    <property type="match status" value="1"/>
</dbReference>
<dbReference type="HAMAP" id="MF_01171">
    <property type="entry name" value="AstA"/>
    <property type="match status" value="1"/>
</dbReference>
<dbReference type="InterPro" id="IPR016181">
    <property type="entry name" value="Acyl_CoA_acyltransferase"/>
</dbReference>
<dbReference type="InterPro" id="IPR007041">
    <property type="entry name" value="Arg_succinylTrfase_AstA/AruG"/>
</dbReference>
<dbReference type="InterPro" id="IPR017650">
    <property type="entry name" value="Arginine_N-succinylTrfase"/>
</dbReference>
<dbReference type="NCBIfam" id="TIGR03243">
    <property type="entry name" value="arg_catab_AOST"/>
    <property type="match status" value="1"/>
</dbReference>
<dbReference type="NCBIfam" id="TIGR03244">
    <property type="entry name" value="arg_catab_AstA"/>
    <property type="match status" value="1"/>
</dbReference>
<dbReference type="NCBIfam" id="NF007770">
    <property type="entry name" value="PRK10456.1"/>
    <property type="match status" value="1"/>
</dbReference>
<dbReference type="PANTHER" id="PTHR30420:SF1">
    <property type="entry name" value="ARGININE N-SUCCINYLTRANSFERASE"/>
    <property type="match status" value="1"/>
</dbReference>
<dbReference type="PANTHER" id="PTHR30420">
    <property type="entry name" value="N-SUCCINYLARGININE DIHYDROLASE"/>
    <property type="match status" value="1"/>
</dbReference>
<dbReference type="Pfam" id="PF04958">
    <property type="entry name" value="AstA"/>
    <property type="match status" value="1"/>
</dbReference>
<dbReference type="SUPFAM" id="SSF55729">
    <property type="entry name" value="Acyl-CoA N-acyltransferases (Nat)"/>
    <property type="match status" value="1"/>
</dbReference>
<organism>
    <name type="scientific">Salmonella typhi</name>
    <dbReference type="NCBI Taxonomy" id="90370"/>
    <lineage>
        <taxon>Bacteria</taxon>
        <taxon>Pseudomonadati</taxon>
        <taxon>Pseudomonadota</taxon>
        <taxon>Gammaproteobacteria</taxon>
        <taxon>Enterobacterales</taxon>
        <taxon>Enterobacteriaceae</taxon>
        <taxon>Salmonella</taxon>
    </lineage>
</organism>
<proteinExistence type="inferred from homology"/>
<comment type="function">
    <text evidence="1">Catalyzes the transfer of succinyl-CoA to arginine to produce N(2)-succinylarginine.</text>
</comment>
<comment type="catalytic activity">
    <reaction evidence="1">
        <text>succinyl-CoA + L-arginine = N(2)-succinyl-L-arginine + CoA + H(+)</text>
        <dbReference type="Rhea" id="RHEA:15185"/>
        <dbReference type="ChEBI" id="CHEBI:15378"/>
        <dbReference type="ChEBI" id="CHEBI:32682"/>
        <dbReference type="ChEBI" id="CHEBI:57287"/>
        <dbReference type="ChEBI" id="CHEBI:57292"/>
        <dbReference type="ChEBI" id="CHEBI:58241"/>
        <dbReference type="EC" id="2.3.1.109"/>
    </reaction>
</comment>
<comment type="pathway">
    <text evidence="1">Amino-acid degradation; L-arginine degradation via AST pathway; L-glutamate and succinate from L-arginine: step 1/5.</text>
</comment>
<comment type="similarity">
    <text evidence="1">Belongs to the arginine N-succinyltransferase family.</text>
</comment>
<comment type="sequence caution" evidence="2">
    <conflict type="frameshift">
        <sequence resource="EMBL" id="AE014613"/>
    </conflict>
</comment>
<keyword id="KW-0012">Acyltransferase</keyword>
<keyword id="KW-0056">Arginine metabolism</keyword>
<keyword id="KW-0808">Transferase</keyword>
<gene>
    <name evidence="1" type="primary">astA</name>
    <name type="ordered locus">STY1810</name>
    <name type="ordered locus">t1183</name>
</gene>
<evidence type="ECO:0000255" key="1">
    <source>
        <dbReference type="HAMAP-Rule" id="MF_01171"/>
    </source>
</evidence>
<evidence type="ECO:0000305" key="2"/>
<protein>
    <recommendedName>
        <fullName evidence="1">Arginine N-succinyltransferase</fullName>
        <shortName evidence="1">AST</shortName>
        <ecNumber evidence="1">2.3.1.109</ecNumber>
    </recommendedName>
    <alternativeName>
        <fullName evidence="1">AOST</fullName>
    </alternativeName>
</protein>
<name>ASTA_SALTI</name>
<sequence>MRVIRPVEHADIAALMQLAGKTGGGLTSLLANEATLAARIERALKTWSGELPKGEQGYVFVLEDSETGEVGGICAIEVAVGLNDPWYNYRVGTLVHASKELNVYNALPTLFLSNDHTGSSELCTLFLDPEWRKEGNGYLLSKSRFMFMAAFRDKFNEKVVAEMRGVIDEHGYSPFWQSLGKRFFSMDFSRADFLCGTGQKAFIAELMPKHPIYTHFLSEEAQAVIGEVHPQTAPARVVLEKEGFRYRHYIDIFDGGPTLECDIDRVRAIRKSRLVEVAEGQPALGDYPACLVANENYHHFRAALVRADPQTSRLVLTAAQLDALKCRAGDHVRLVRLCAEEKTV</sequence>
<feature type="chain" id="PRO_0000262328" description="Arginine N-succinyltransferase">
    <location>
        <begin position="1"/>
        <end position="344"/>
    </location>
</feature>
<feature type="active site" description="Proton donor" evidence="1">
    <location>
        <position position="229"/>
    </location>
</feature>
<feature type="binding site" evidence="1">
    <location>
        <position position="125"/>
    </location>
    <ligand>
        <name>succinyl-CoA</name>
        <dbReference type="ChEBI" id="CHEBI:57292"/>
    </ligand>
</feature>
<reference key="1">
    <citation type="journal article" date="2001" name="Nature">
        <title>Complete genome sequence of a multiple drug resistant Salmonella enterica serovar Typhi CT18.</title>
        <authorList>
            <person name="Parkhill J."/>
            <person name="Dougan G."/>
            <person name="James K.D."/>
            <person name="Thomson N.R."/>
            <person name="Pickard D."/>
            <person name="Wain J."/>
            <person name="Churcher C.M."/>
            <person name="Mungall K.L."/>
            <person name="Bentley S.D."/>
            <person name="Holden M.T.G."/>
            <person name="Sebaihia M."/>
            <person name="Baker S."/>
            <person name="Basham D."/>
            <person name="Brooks K."/>
            <person name="Chillingworth T."/>
            <person name="Connerton P."/>
            <person name="Cronin A."/>
            <person name="Davis P."/>
            <person name="Davies R.M."/>
            <person name="Dowd L."/>
            <person name="White N."/>
            <person name="Farrar J."/>
            <person name="Feltwell T."/>
            <person name="Hamlin N."/>
            <person name="Haque A."/>
            <person name="Hien T.T."/>
            <person name="Holroyd S."/>
            <person name="Jagels K."/>
            <person name="Krogh A."/>
            <person name="Larsen T.S."/>
            <person name="Leather S."/>
            <person name="Moule S."/>
            <person name="O'Gaora P."/>
            <person name="Parry C."/>
            <person name="Quail M.A."/>
            <person name="Rutherford K.M."/>
            <person name="Simmonds M."/>
            <person name="Skelton J."/>
            <person name="Stevens K."/>
            <person name="Whitehead S."/>
            <person name="Barrell B.G."/>
        </authorList>
    </citation>
    <scope>NUCLEOTIDE SEQUENCE [LARGE SCALE GENOMIC DNA]</scope>
    <source>
        <strain>CT18</strain>
    </source>
</reference>
<reference key="2">
    <citation type="journal article" date="2003" name="J. Bacteriol.">
        <title>Comparative genomics of Salmonella enterica serovar Typhi strains Ty2 and CT18.</title>
        <authorList>
            <person name="Deng W."/>
            <person name="Liou S.-R."/>
            <person name="Plunkett G. III"/>
            <person name="Mayhew G.F."/>
            <person name="Rose D.J."/>
            <person name="Burland V."/>
            <person name="Kodoyianni V."/>
            <person name="Schwartz D.C."/>
            <person name="Blattner F.R."/>
        </authorList>
    </citation>
    <scope>NUCLEOTIDE SEQUENCE [LARGE SCALE GENOMIC DNA]</scope>
    <source>
        <strain>ATCC 700931 / Ty2</strain>
    </source>
</reference>
<accession>Q8Z6G0</accession>